<reference key="1">
    <citation type="journal article" date="2005" name="Plant Mol. Biol.">
        <title>Characterization of plant Aurora kinases during mitosis.</title>
        <authorList>
            <person name="Kawabe A."/>
            <person name="Matsunaga S."/>
            <person name="Nakagawa K."/>
            <person name="Kurihara D."/>
            <person name="Yoneda A."/>
            <person name="Hasezawa S."/>
            <person name="Uchiyama S."/>
            <person name="Fukui K."/>
        </authorList>
    </citation>
    <scope>NUCLEOTIDE SEQUENCE [GENOMIC DNA] (ISOFORM 1)</scope>
    <scope>FUNCTION</scope>
    <scope>SUBCELLULAR LOCATION</scope>
    <source>
        <strain>cv. Columbia</strain>
    </source>
</reference>
<reference key="2">
    <citation type="journal article" date="2005" name="Plant Cell">
        <title>Identification and dynamics of two classes of aurora-like kinases in Arabidopsis and other plants.</title>
        <authorList>
            <person name="Demidov D."/>
            <person name="Van Damme D."/>
            <person name="Geelen D."/>
            <person name="Blattner F.R."/>
            <person name="Houben A."/>
        </authorList>
    </citation>
    <scope>NUCLEOTIDE SEQUENCE [MRNA] (ISOFORM 1)</scope>
    <scope>SUBCELLULAR LOCATION</scope>
    <scope>DEVELOPMENTAL STAGE</scope>
    <scope>TISSUE SPECIFICITY</scope>
    <source>
        <strain>cv. Columbia</strain>
    </source>
</reference>
<reference key="3">
    <citation type="journal article" date="1999" name="Nature">
        <title>Sequence and analysis of chromosome 2 of the plant Arabidopsis thaliana.</title>
        <authorList>
            <person name="Lin X."/>
            <person name="Kaul S."/>
            <person name="Rounsley S.D."/>
            <person name="Shea T.P."/>
            <person name="Benito M.-I."/>
            <person name="Town C.D."/>
            <person name="Fujii C.Y."/>
            <person name="Mason T.M."/>
            <person name="Bowman C.L."/>
            <person name="Barnstead M.E."/>
            <person name="Feldblyum T.V."/>
            <person name="Buell C.R."/>
            <person name="Ketchum K.A."/>
            <person name="Lee J.J."/>
            <person name="Ronning C.M."/>
            <person name="Koo H.L."/>
            <person name="Moffat K.S."/>
            <person name="Cronin L.A."/>
            <person name="Shen M."/>
            <person name="Pai G."/>
            <person name="Van Aken S."/>
            <person name="Umayam L."/>
            <person name="Tallon L.J."/>
            <person name="Gill J.E."/>
            <person name="Adams M.D."/>
            <person name="Carrera A.J."/>
            <person name="Creasy T.H."/>
            <person name="Goodman H.M."/>
            <person name="Somerville C.R."/>
            <person name="Copenhaver G.P."/>
            <person name="Preuss D."/>
            <person name="Nierman W.C."/>
            <person name="White O."/>
            <person name="Eisen J.A."/>
            <person name="Salzberg S.L."/>
            <person name="Fraser C.M."/>
            <person name="Venter J.C."/>
        </authorList>
    </citation>
    <scope>NUCLEOTIDE SEQUENCE [LARGE SCALE GENOMIC DNA]</scope>
    <source>
        <strain>cv. Columbia</strain>
    </source>
</reference>
<reference key="4">
    <citation type="journal article" date="2017" name="Plant J.">
        <title>Araport11: a complete reannotation of the Arabidopsis thaliana reference genome.</title>
        <authorList>
            <person name="Cheng C.Y."/>
            <person name="Krishnakumar V."/>
            <person name="Chan A.P."/>
            <person name="Thibaud-Nissen F."/>
            <person name="Schobel S."/>
            <person name="Town C.D."/>
        </authorList>
    </citation>
    <scope>GENOME REANNOTATION</scope>
    <source>
        <strain>cv. Columbia</strain>
    </source>
</reference>
<reference key="5">
    <citation type="submission" date="2003-10" db="EMBL/GenBank/DDBJ databases">
        <title>Arabidopsis ORF clones.</title>
        <authorList>
            <person name="Shinn P."/>
            <person name="Chen H."/>
            <person name="Cheuk R.F."/>
            <person name="Kim C.J."/>
            <person name="Carninci P."/>
            <person name="Hayashizaki Y."/>
            <person name="Ishida J."/>
            <person name="Kamiya A."/>
            <person name="Kawai J."/>
            <person name="Narusaka M."/>
            <person name="Sakurai T."/>
            <person name="Satou M."/>
            <person name="Seki M."/>
            <person name="Shinozaki K."/>
            <person name="Ecker J.R."/>
        </authorList>
    </citation>
    <scope>NUCLEOTIDE SEQUENCE [LARGE SCALE MRNA] (ISOFORM 1)</scope>
    <source>
        <strain>cv. Columbia</strain>
    </source>
</reference>
<reference key="6">
    <citation type="submission" date="2004-09" db="EMBL/GenBank/DDBJ databases">
        <title>Large-scale analysis of RIKEN Arabidopsis full-length (RAFL) cDNAs.</title>
        <authorList>
            <person name="Totoki Y."/>
            <person name="Seki M."/>
            <person name="Ishida J."/>
            <person name="Nakajima M."/>
            <person name="Enju A."/>
            <person name="Kamiya A."/>
            <person name="Narusaka M."/>
            <person name="Shin-i T."/>
            <person name="Nakagawa M."/>
            <person name="Sakamoto N."/>
            <person name="Oishi K."/>
            <person name="Kohara Y."/>
            <person name="Kobayashi M."/>
            <person name="Toyoda A."/>
            <person name="Sakaki Y."/>
            <person name="Sakurai T."/>
            <person name="Iida K."/>
            <person name="Akiyama K."/>
            <person name="Satou M."/>
            <person name="Toyoda T."/>
            <person name="Konagaya A."/>
            <person name="Carninci P."/>
            <person name="Kawai J."/>
            <person name="Hayashizaki Y."/>
            <person name="Shinozaki K."/>
        </authorList>
    </citation>
    <scope>NUCLEOTIDE SEQUENCE [LARGE SCALE MRNA] (ISOFORM 2)</scope>
    <source>
        <strain>cv. Columbia</strain>
    </source>
</reference>
<feature type="chain" id="PRO_0000270793" description="Serine/threonine-protein kinase Aurora-2">
    <location>
        <begin position="1"/>
        <end position="282"/>
    </location>
</feature>
<feature type="domain" description="Protein kinase" evidence="4">
    <location>
        <begin position="19"/>
        <end position="270"/>
    </location>
</feature>
<feature type="active site" description="Proton acceptor" evidence="4 5">
    <location>
        <position position="142"/>
    </location>
</feature>
<feature type="binding site" evidence="4">
    <location>
        <begin position="25"/>
        <end position="33"/>
    </location>
    <ligand>
        <name>ATP</name>
        <dbReference type="ChEBI" id="CHEBI:30616"/>
    </ligand>
</feature>
<feature type="binding site" evidence="4">
    <location>
        <position position="48"/>
    </location>
    <ligand>
        <name>ATP</name>
        <dbReference type="ChEBI" id="CHEBI:30616"/>
    </ligand>
</feature>
<feature type="modified residue" description="Phosphoserine" evidence="3">
    <location>
        <position position="164"/>
    </location>
</feature>
<feature type="modified residue" description="Phosphothreonine" evidence="2">
    <location>
        <position position="173"/>
    </location>
</feature>
<feature type="splice variant" id="VSP_022228" description="In isoform 2." evidence="8">
    <original>MLYQ</original>
    <variation>MGISTETQQI</variation>
    <location>
        <begin position="1"/>
        <end position="4"/>
    </location>
</feature>
<protein>
    <recommendedName>
        <fullName>Serine/threonine-protein kinase Aurora-2</fullName>
        <shortName>AtAur2</shortName>
        <ecNumber>2.7.11.1</ecNumber>
    </recommendedName>
    <alternativeName>
        <fullName>Aurora-like kinase 2</fullName>
    </alternativeName>
</protein>
<proteinExistence type="evidence at protein level"/>
<sequence length="282" mass="32757">MLYQAASEAAQKRWTTSDFDIGKPLGRGKFGHVYLAREKRSDHIVALKVLFKAQLQQSQVEHQLRREVEIQSHLRHPNILRLYGYFYDQKRVYLILEYAVRGELYKELQKCKYFSERRAATYVASLARALIYCHGKHVIHRDIKPENLLIGAQGELKIADFGWSVHTFNRRRTMCGTLDYLPPEMVESVEHDASVDIWSLGILCYEFLYGVPPFEAREHSETYKRIVQVDLKFPPKPIVSSSAKDLISQMLVKESTQRLALHKLLEHPWIVQNADPSGLYRG</sequence>
<comment type="function">
    <text evidence="7">Phosphorylates specifically 'Ser-10' of histone H3 in vitro. Associates with cytoskeletal structures that are necessary for cytokinesis and with the microtubule spindle. Might colocalize with gamma-tubulin and function in microtubule organizing centers (MTOCs).</text>
</comment>
<comment type="catalytic activity">
    <reaction>
        <text>L-seryl-[protein] + ATP = O-phospho-L-seryl-[protein] + ADP + H(+)</text>
        <dbReference type="Rhea" id="RHEA:17989"/>
        <dbReference type="Rhea" id="RHEA-COMP:9863"/>
        <dbReference type="Rhea" id="RHEA-COMP:11604"/>
        <dbReference type="ChEBI" id="CHEBI:15378"/>
        <dbReference type="ChEBI" id="CHEBI:29999"/>
        <dbReference type="ChEBI" id="CHEBI:30616"/>
        <dbReference type="ChEBI" id="CHEBI:83421"/>
        <dbReference type="ChEBI" id="CHEBI:456216"/>
        <dbReference type="EC" id="2.7.11.1"/>
    </reaction>
</comment>
<comment type="catalytic activity">
    <reaction>
        <text>L-threonyl-[protein] + ATP = O-phospho-L-threonyl-[protein] + ADP + H(+)</text>
        <dbReference type="Rhea" id="RHEA:46608"/>
        <dbReference type="Rhea" id="RHEA-COMP:11060"/>
        <dbReference type="Rhea" id="RHEA-COMP:11605"/>
        <dbReference type="ChEBI" id="CHEBI:15378"/>
        <dbReference type="ChEBI" id="CHEBI:30013"/>
        <dbReference type="ChEBI" id="CHEBI:30616"/>
        <dbReference type="ChEBI" id="CHEBI:61977"/>
        <dbReference type="ChEBI" id="CHEBI:456216"/>
        <dbReference type="EC" id="2.7.11.1"/>
    </reaction>
</comment>
<comment type="interaction">
    <interactant intactId="EBI-25517163">
        <id>Q683C9</id>
    </interactant>
    <interactant intactId="EBI-25506855">
        <id>O23160</id>
        <label>MYB73</label>
    </interactant>
    <organismsDiffer>false</organismsDiffer>
    <experiments>3</experiments>
</comment>
<comment type="interaction">
    <interactant intactId="EBI-25517163">
        <id>Q683C9</id>
    </interactant>
    <interactant intactId="EBI-4441057">
        <id>Q9SSA8</id>
        <label>RAP2-12</label>
    </interactant>
    <organismsDiffer>false</organismsDiffer>
    <experiments>3</experiments>
</comment>
<comment type="subcellular location">
    <subcellularLocation>
        <location>Nucleus membrane</location>
    </subcellularLocation>
    <subcellularLocation>
        <location>Cytoplasm</location>
        <location>Cytoskeleton</location>
        <location>Spindle</location>
    </subcellularLocation>
    <subcellularLocation>
        <location>Cytoplasm</location>
        <location>Cytoskeleton</location>
        <location>Spindle pole</location>
    </subcellularLocation>
    <text>Nuclear membrane in interphase cells, spindle poles at prophase and mitotic spindle from metaphase to telophase.</text>
</comment>
<comment type="alternative products">
    <event type="alternative splicing"/>
    <isoform>
        <id>Q683C9-1</id>
        <name>1</name>
        <sequence type="displayed"/>
    </isoform>
    <isoform>
        <id>Q683C9-2</id>
        <name>2</name>
        <sequence type="described" ref="VSP_022228"/>
    </isoform>
</comment>
<comment type="tissue specificity">
    <text evidence="6">Abundant in roots, flowers and flower buds, low or absent in expanded leaves, stems and siliques.</text>
</comment>
<comment type="developmental stage">
    <text evidence="6">Expression peaks at mitosis.</text>
</comment>
<comment type="PTM">
    <text evidence="1">Phosphorylation at Thr-173 may regulate activity and degradation of AUR2 in a cell cycle dependent manner.</text>
</comment>
<comment type="similarity">
    <text evidence="4">Belongs to the protein kinase superfamily. Ser/Thr protein kinase family. Aurora subfamily.</text>
</comment>
<organism>
    <name type="scientific">Arabidopsis thaliana</name>
    <name type="common">Mouse-ear cress</name>
    <dbReference type="NCBI Taxonomy" id="3702"/>
    <lineage>
        <taxon>Eukaryota</taxon>
        <taxon>Viridiplantae</taxon>
        <taxon>Streptophyta</taxon>
        <taxon>Embryophyta</taxon>
        <taxon>Tracheophyta</taxon>
        <taxon>Spermatophyta</taxon>
        <taxon>Magnoliopsida</taxon>
        <taxon>eudicotyledons</taxon>
        <taxon>Gunneridae</taxon>
        <taxon>Pentapetalae</taxon>
        <taxon>rosids</taxon>
        <taxon>malvids</taxon>
        <taxon>Brassicales</taxon>
        <taxon>Brassicaceae</taxon>
        <taxon>Camelineae</taxon>
        <taxon>Arabidopsis</taxon>
    </lineage>
</organism>
<gene>
    <name type="primary">AUR2</name>
    <name type="ordered locus">At2g25880</name>
    <name type="ORF">F17H15.9</name>
</gene>
<accession>Q683C9</accession>
<accession>O82309</accession>
<evidence type="ECO:0000250" key="1"/>
<evidence type="ECO:0000250" key="2">
    <source>
        <dbReference type="UniProtKB" id="Q38997"/>
    </source>
</evidence>
<evidence type="ECO:0000250" key="3">
    <source>
        <dbReference type="UniProtKB" id="Q93V58"/>
    </source>
</evidence>
<evidence type="ECO:0000255" key="4">
    <source>
        <dbReference type="PROSITE-ProRule" id="PRU00159"/>
    </source>
</evidence>
<evidence type="ECO:0000255" key="5">
    <source>
        <dbReference type="PROSITE-ProRule" id="PRU10027"/>
    </source>
</evidence>
<evidence type="ECO:0000269" key="6">
    <source>
    </source>
</evidence>
<evidence type="ECO:0000269" key="7">
    <source>
    </source>
</evidence>
<evidence type="ECO:0000303" key="8">
    <source ref="6"/>
</evidence>
<name>AUR2_ARATH</name>
<keyword id="KW-0025">Alternative splicing</keyword>
<keyword id="KW-0067">ATP-binding</keyword>
<keyword id="KW-0963">Cytoplasm</keyword>
<keyword id="KW-0206">Cytoskeleton</keyword>
<keyword id="KW-0418">Kinase</keyword>
<keyword id="KW-0472">Membrane</keyword>
<keyword id="KW-0547">Nucleotide-binding</keyword>
<keyword id="KW-0539">Nucleus</keyword>
<keyword id="KW-0597">Phosphoprotein</keyword>
<keyword id="KW-1185">Reference proteome</keyword>
<keyword id="KW-0723">Serine/threonine-protein kinase</keyword>
<keyword id="KW-0808">Transferase</keyword>
<dbReference type="EC" id="2.7.11.1"/>
<dbReference type="EMBL" id="AB196734">
    <property type="protein sequence ID" value="BAE00020.1"/>
    <property type="molecule type" value="Genomic_DNA"/>
</dbReference>
<dbReference type="EMBL" id="AJ854184">
    <property type="protein sequence ID" value="CAH69533.1"/>
    <property type="molecule type" value="mRNA"/>
</dbReference>
<dbReference type="EMBL" id="AC005395">
    <property type="protein sequence ID" value="AAC42257.1"/>
    <property type="molecule type" value="Genomic_DNA"/>
</dbReference>
<dbReference type="EMBL" id="CP002685">
    <property type="protein sequence ID" value="AEC07766.1"/>
    <property type="molecule type" value="Genomic_DNA"/>
</dbReference>
<dbReference type="EMBL" id="BT010653">
    <property type="protein sequence ID" value="AAR07517.1"/>
    <property type="molecule type" value="mRNA"/>
</dbReference>
<dbReference type="EMBL" id="AK175188">
    <property type="protein sequence ID" value="BAD42951.1"/>
    <property type="molecule type" value="mRNA"/>
</dbReference>
<dbReference type="PIR" id="H84653">
    <property type="entry name" value="H84653"/>
</dbReference>
<dbReference type="RefSeq" id="NP_180159.2">
    <molecule id="Q683C9-2"/>
    <property type="nucleotide sequence ID" value="NM_128148.4"/>
</dbReference>
<dbReference type="SMR" id="Q683C9"/>
<dbReference type="BioGRID" id="2481">
    <property type="interactions" value="2"/>
</dbReference>
<dbReference type="FunCoup" id="Q683C9">
    <property type="interactions" value="2349"/>
</dbReference>
<dbReference type="IntAct" id="Q683C9">
    <property type="interactions" value="2"/>
</dbReference>
<dbReference type="STRING" id="3702.Q683C9"/>
<dbReference type="PaxDb" id="3702-AT2G25880.1"/>
<dbReference type="PeptideAtlas" id="Q683C9"/>
<dbReference type="ProteomicsDB" id="241104">
    <molecule id="Q683C9-1"/>
</dbReference>
<dbReference type="EnsemblPlants" id="AT2G25880.1">
    <molecule id="Q683C9-2"/>
    <property type="protein sequence ID" value="AT2G25880.1"/>
    <property type="gene ID" value="AT2G25880"/>
</dbReference>
<dbReference type="GeneID" id="817129"/>
<dbReference type="Gramene" id="AT2G25880.1">
    <molecule id="Q683C9-2"/>
    <property type="protein sequence ID" value="AT2G25880.1"/>
    <property type="gene ID" value="AT2G25880"/>
</dbReference>
<dbReference type="KEGG" id="ath:AT2G25880"/>
<dbReference type="Araport" id="AT2G25880"/>
<dbReference type="TAIR" id="AT2G25880">
    <property type="gene designation" value="AUR2"/>
</dbReference>
<dbReference type="eggNOG" id="KOG0580">
    <property type="taxonomic scope" value="Eukaryota"/>
</dbReference>
<dbReference type="HOGENOM" id="CLU_000288_63_0_1"/>
<dbReference type="InParanoid" id="Q683C9"/>
<dbReference type="OrthoDB" id="377346at2759"/>
<dbReference type="PhylomeDB" id="Q683C9"/>
<dbReference type="CD-CODE" id="33FCD62D">
    <property type="entry name" value="Centrosome"/>
</dbReference>
<dbReference type="PRO" id="PR:Q683C9"/>
<dbReference type="Proteomes" id="UP000006548">
    <property type="component" value="Chromosome 2"/>
</dbReference>
<dbReference type="ExpressionAtlas" id="Q683C9">
    <property type="expression patterns" value="baseline and differential"/>
</dbReference>
<dbReference type="GO" id="GO:0005737">
    <property type="term" value="C:cytoplasm"/>
    <property type="evidence" value="ECO:0007669"/>
    <property type="project" value="UniProtKB-KW"/>
</dbReference>
<dbReference type="GO" id="GO:0031965">
    <property type="term" value="C:nuclear membrane"/>
    <property type="evidence" value="ECO:0007669"/>
    <property type="project" value="UniProtKB-SubCell"/>
</dbReference>
<dbReference type="GO" id="GO:0005634">
    <property type="term" value="C:nucleus"/>
    <property type="evidence" value="ECO:0000314"/>
    <property type="project" value="TAIR"/>
</dbReference>
<dbReference type="GO" id="GO:0000922">
    <property type="term" value="C:spindle pole"/>
    <property type="evidence" value="ECO:0007669"/>
    <property type="project" value="UniProtKB-SubCell"/>
</dbReference>
<dbReference type="GO" id="GO:0005524">
    <property type="term" value="F:ATP binding"/>
    <property type="evidence" value="ECO:0007669"/>
    <property type="project" value="UniProtKB-KW"/>
</dbReference>
<dbReference type="GO" id="GO:0035175">
    <property type="term" value="F:histone H3S10 kinase activity"/>
    <property type="evidence" value="ECO:0000314"/>
    <property type="project" value="TAIR"/>
</dbReference>
<dbReference type="GO" id="GO:0106310">
    <property type="term" value="F:protein serine kinase activity"/>
    <property type="evidence" value="ECO:0007669"/>
    <property type="project" value="RHEA"/>
</dbReference>
<dbReference type="CDD" id="cd14007">
    <property type="entry name" value="STKc_Aurora"/>
    <property type="match status" value="1"/>
</dbReference>
<dbReference type="FunFam" id="3.30.200.20:FF:000042">
    <property type="entry name" value="Aurora kinase A"/>
    <property type="match status" value="1"/>
</dbReference>
<dbReference type="FunFam" id="1.10.510.10:FF:000385">
    <property type="entry name" value="serine/threonine-protein kinase Aurora-1"/>
    <property type="match status" value="1"/>
</dbReference>
<dbReference type="Gene3D" id="3.30.200.20">
    <property type="entry name" value="Phosphorylase Kinase, domain 1"/>
    <property type="match status" value="1"/>
</dbReference>
<dbReference type="Gene3D" id="1.10.510.10">
    <property type="entry name" value="Transferase(Phosphotransferase) domain 1"/>
    <property type="match status" value="1"/>
</dbReference>
<dbReference type="InterPro" id="IPR030616">
    <property type="entry name" value="Aur-like"/>
</dbReference>
<dbReference type="InterPro" id="IPR011009">
    <property type="entry name" value="Kinase-like_dom_sf"/>
</dbReference>
<dbReference type="InterPro" id="IPR000719">
    <property type="entry name" value="Prot_kinase_dom"/>
</dbReference>
<dbReference type="InterPro" id="IPR017441">
    <property type="entry name" value="Protein_kinase_ATP_BS"/>
</dbReference>
<dbReference type="InterPro" id="IPR008271">
    <property type="entry name" value="Ser/Thr_kinase_AS"/>
</dbReference>
<dbReference type="PANTHER" id="PTHR24350">
    <property type="entry name" value="SERINE/THREONINE-PROTEIN KINASE IAL-RELATED"/>
    <property type="match status" value="1"/>
</dbReference>
<dbReference type="Pfam" id="PF00069">
    <property type="entry name" value="Pkinase"/>
    <property type="match status" value="1"/>
</dbReference>
<dbReference type="PIRSF" id="PIRSF000654">
    <property type="entry name" value="Integrin-linked_kinase"/>
    <property type="match status" value="1"/>
</dbReference>
<dbReference type="SMART" id="SM00220">
    <property type="entry name" value="S_TKc"/>
    <property type="match status" value="1"/>
</dbReference>
<dbReference type="SUPFAM" id="SSF56112">
    <property type="entry name" value="Protein kinase-like (PK-like)"/>
    <property type="match status" value="1"/>
</dbReference>
<dbReference type="PROSITE" id="PS00107">
    <property type="entry name" value="PROTEIN_KINASE_ATP"/>
    <property type="match status" value="1"/>
</dbReference>
<dbReference type="PROSITE" id="PS50011">
    <property type="entry name" value="PROTEIN_KINASE_DOM"/>
    <property type="match status" value="1"/>
</dbReference>
<dbReference type="PROSITE" id="PS00108">
    <property type="entry name" value="PROTEIN_KINASE_ST"/>
    <property type="match status" value="1"/>
</dbReference>